<organism>
    <name type="scientific">Bos taurus</name>
    <name type="common">Bovine</name>
    <dbReference type="NCBI Taxonomy" id="9913"/>
    <lineage>
        <taxon>Eukaryota</taxon>
        <taxon>Metazoa</taxon>
        <taxon>Chordata</taxon>
        <taxon>Craniata</taxon>
        <taxon>Vertebrata</taxon>
        <taxon>Euteleostomi</taxon>
        <taxon>Mammalia</taxon>
        <taxon>Eutheria</taxon>
        <taxon>Laurasiatheria</taxon>
        <taxon>Artiodactyla</taxon>
        <taxon>Ruminantia</taxon>
        <taxon>Pecora</taxon>
        <taxon>Bovidae</taxon>
        <taxon>Bovinae</taxon>
        <taxon>Bos</taxon>
    </lineage>
</organism>
<accession>Q08D88</accession>
<sequence>MQLRKMQSIKKEQASLDAGTNVDKMMVLNSALTEVSEDLTTGEELLLNEGSVGKNKSSACRRKREFIPDEKKDAMYWEKRRKNNEAAKRSREKRRLNDLVLENKLIALGEENATLKAELLSLKLKFGLISSTAYAQEIQKLSNSTAVYFQDYQTSKSTVSAFVDEHEPSMVASSCISVIKHSPQSSLSDVSEVSSLEHSQEGPVQNGCRSPESKFQVIKQEPMELESYAREPRDDRGAYRGAVYQNYMGNSFPGYSHSPPLLQVNRSSSNSPRTSETDEGAVGKSSDGEDEQQVPKGPIHSPVELQRVHATVVKVPEVNSSALPHKLRIKAKAMQIKVEAFDHEFDGTQKLSSPVDMTSKRHFELEKHTTPNLVHSSLTPFSVQVTNIQDWSLKSEHWHQKELNGKTQSSFKTGVVEVKDSGYKVSDPENLFLKQGIANLSAEVVSLKRLIATHQISASDSG</sequence>
<feature type="chain" id="PRO_0000292666" description="Nuclear factor interleukin-3-regulated protein">
    <location>
        <begin position="1"/>
        <end position="462"/>
    </location>
</feature>
<feature type="domain" description="bZIP" evidence="3">
    <location>
        <begin position="73"/>
        <end position="136"/>
    </location>
</feature>
<feature type="region of interest" description="Basic motif" evidence="3">
    <location>
        <begin position="79"/>
        <end position="95"/>
    </location>
</feature>
<feature type="region of interest" description="Leucine-zipper" evidence="3">
    <location>
        <begin position="99"/>
        <end position="106"/>
    </location>
</feature>
<feature type="region of interest" description="Disordered" evidence="4">
    <location>
        <begin position="189"/>
        <end position="236"/>
    </location>
</feature>
<feature type="region of interest" description="Disordered" evidence="4">
    <location>
        <begin position="254"/>
        <end position="303"/>
    </location>
</feature>
<feature type="compositionally biased region" description="Basic and acidic residues" evidence="4">
    <location>
        <begin position="227"/>
        <end position="236"/>
    </location>
</feature>
<feature type="compositionally biased region" description="Polar residues" evidence="4">
    <location>
        <begin position="264"/>
        <end position="274"/>
    </location>
</feature>
<feature type="modified residue" description="Phosphoserine" evidence="2">
    <location>
        <position position="301"/>
    </location>
</feature>
<feature type="modified residue" description="Phosphoserine" evidence="2">
    <location>
        <position position="353"/>
    </location>
</feature>
<feature type="cross-link" description="Glycyl lysine isopeptide (Lys-Gly) (interchain with G-Cter in SUMO2)" evidence="2">
    <location>
        <position position="24"/>
    </location>
</feature>
<feature type="cross-link" description="Glycyl lysine isopeptide (Lys-Gly) (interchain with G-Cter in SUMO2)" evidence="2">
    <location>
        <position position="214"/>
    </location>
</feature>
<feature type="cross-link" description="Glycyl lysine isopeptide (Lys-Gly) (interchain with G-Cter in SUMO1); alternate" evidence="2">
    <location>
        <position position="219"/>
    </location>
</feature>
<feature type="cross-link" description="Glycyl lysine isopeptide (Lys-Gly) (interchain with G-Cter in SUMO2); alternate" evidence="2">
    <location>
        <position position="219"/>
    </location>
</feature>
<feature type="cross-link" description="Glycyl lysine isopeptide (Lys-Gly) (interchain with G-Cter in SUMO2)" evidence="2">
    <location>
        <position position="314"/>
    </location>
</feature>
<feature type="cross-link" description="Glycyl lysine isopeptide (Lys-Gly) (interchain with G-Cter in SUMO2)" evidence="2">
    <location>
        <position position="326"/>
    </location>
</feature>
<feature type="cross-link" description="Glycyl lysine isopeptide (Lys-Gly) (interchain with G-Cter in SUMO2)" evidence="2">
    <location>
        <position position="332"/>
    </location>
</feature>
<feature type="cross-link" description="Glycyl lysine isopeptide (Lys-Gly) (interchain with G-Cter in SUMO2)" evidence="2">
    <location>
        <position position="337"/>
    </location>
</feature>
<feature type="cross-link" description="Glycyl lysine isopeptide (Lys-Gly) (interchain with G-Cter in SUMO2)" evidence="2">
    <location>
        <position position="350"/>
    </location>
</feature>
<feature type="cross-link" description="Glycyl lysine isopeptide (Lys-Gly) (interchain with G-Cter in SUMO2)" evidence="2">
    <location>
        <position position="360"/>
    </location>
</feature>
<feature type="cross-link" description="Glycyl lysine isopeptide (Lys-Gly) (interchain with G-Cter in SUMO2)" evidence="2">
    <location>
        <position position="394"/>
    </location>
</feature>
<feature type="cross-link" description="Glycyl lysine isopeptide (Lys-Gly) (interchain with G-Cter in SUMO2)" evidence="2">
    <location>
        <position position="401"/>
    </location>
</feature>
<feature type="cross-link" description="Glycyl lysine isopeptide (Lys-Gly) (interchain with G-Cter in SUMO2)" evidence="2">
    <location>
        <position position="406"/>
    </location>
</feature>
<feature type="cross-link" description="Glycyl lysine isopeptide (Lys-Gly) (interchain with G-Cter in SUMO2)" evidence="2">
    <location>
        <position position="412"/>
    </location>
</feature>
<feature type="cross-link" description="Glycyl lysine isopeptide (Lys-Gly) (interchain with G-Cter in SUMO2)" evidence="2">
    <location>
        <position position="419"/>
    </location>
</feature>
<feature type="cross-link" description="Glycyl lysine isopeptide (Lys-Gly) (interchain with G-Cter in SUMO2)" evidence="2">
    <location>
        <position position="424"/>
    </location>
</feature>
<feature type="cross-link" description="Glycyl lysine isopeptide (Lys-Gly) (interchain with G-Cter in SUMO2)" evidence="2">
    <location>
        <position position="434"/>
    </location>
</feature>
<feature type="cross-link" description="Glycyl lysine isopeptide (Lys-Gly) (interchain with G-Cter in SUMO2)" evidence="2">
    <location>
        <position position="448"/>
    </location>
</feature>
<name>NFIL3_BOVIN</name>
<gene>
    <name type="primary">NFIL3</name>
</gene>
<reference key="1">
    <citation type="submission" date="2006-09" db="EMBL/GenBank/DDBJ databases">
        <authorList>
            <consortium name="NIH - Mammalian Gene Collection (MGC) project"/>
        </authorList>
    </citation>
    <scope>NUCLEOTIDE SEQUENCE [LARGE SCALE MRNA]</scope>
    <source>
        <strain>Hereford</strain>
        <tissue>Fetal skin</tissue>
    </source>
</reference>
<protein>
    <recommendedName>
        <fullName>Nuclear factor interleukin-3-regulated protein</fullName>
    </recommendedName>
</protein>
<keyword id="KW-0010">Activator</keyword>
<keyword id="KW-0090">Biological rhythms</keyword>
<keyword id="KW-0238">DNA-binding</keyword>
<keyword id="KW-1017">Isopeptide bond</keyword>
<keyword id="KW-0539">Nucleus</keyword>
<keyword id="KW-0597">Phosphoprotein</keyword>
<keyword id="KW-1185">Reference proteome</keyword>
<keyword id="KW-0678">Repressor</keyword>
<keyword id="KW-0804">Transcription</keyword>
<keyword id="KW-0805">Transcription regulation</keyword>
<keyword id="KW-0832">Ubl conjugation</keyword>
<evidence type="ECO:0000250" key="1">
    <source>
        <dbReference type="UniProtKB" id="O08750"/>
    </source>
</evidence>
<evidence type="ECO:0000250" key="2">
    <source>
        <dbReference type="UniProtKB" id="Q16649"/>
    </source>
</evidence>
<evidence type="ECO:0000255" key="3">
    <source>
        <dbReference type="PROSITE-ProRule" id="PRU00978"/>
    </source>
</evidence>
<evidence type="ECO:0000256" key="4">
    <source>
        <dbReference type="SAM" id="MobiDB-lite"/>
    </source>
</evidence>
<evidence type="ECO:0000305" key="5"/>
<dbReference type="EMBL" id="BC123885">
    <property type="protein sequence ID" value="AAI23886.1"/>
    <property type="molecule type" value="mRNA"/>
</dbReference>
<dbReference type="RefSeq" id="NP_001068708.1">
    <property type="nucleotide sequence ID" value="NM_001075240.1"/>
</dbReference>
<dbReference type="RefSeq" id="XP_005210477.1">
    <property type="nucleotide sequence ID" value="XM_005210420.4"/>
</dbReference>
<dbReference type="RefSeq" id="XP_015328138.1">
    <property type="nucleotide sequence ID" value="XM_015472652.3"/>
</dbReference>
<dbReference type="RefSeq" id="XP_024851278.1">
    <property type="nucleotide sequence ID" value="XM_024995510.2"/>
</dbReference>
<dbReference type="SMR" id="Q08D88"/>
<dbReference type="FunCoup" id="Q08D88">
    <property type="interactions" value="57"/>
</dbReference>
<dbReference type="PaxDb" id="9913-ENSBTAP00000023618"/>
<dbReference type="Ensembl" id="ENSBTAT00000091364.1">
    <property type="protein sequence ID" value="ENSBTAP00000101723.1"/>
    <property type="gene ID" value="ENSBTAG00000065834.1"/>
</dbReference>
<dbReference type="Ensembl" id="ENSBTAT00000096017.1">
    <property type="protein sequence ID" value="ENSBTAP00000090656.1"/>
    <property type="gene ID" value="ENSBTAG00000065834.1"/>
</dbReference>
<dbReference type="Ensembl" id="ENSBTAT00000107037.1">
    <property type="protein sequence ID" value="ENSBTAP00000076890.1"/>
    <property type="gene ID" value="ENSBTAG00000065834.1"/>
</dbReference>
<dbReference type="Ensembl" id="ENSBTAT00000118129.1">
    <property type="protein sequence ID" value="ENSBTAP00000075997.1"/>
    <property type="gene ID" value="ENSBTAG00000065834.1"/>
</dbReference>
<dbReference type="Ensembl" id="ENSBTAT00000127849.1">
    <property type="protein sequence ID" value="ENSBTAP00000094222.1"/>
    <property type="gene ID" value="ENSBTAG00000065834.1"/>
</dbReference>
<dbReference type="Ensembl" id="ENSBTAT00000132295.1">
    <property type="protein sequence ID" value="ENSBTAP00000077576.1"/>
    <property type="gene ID" value="ENSBTAG00000065834.1"/>
</dbReference>
<dbReference type="GeneID" id="506097"/>
<dbReference type="KEGG" id="bta:506097"/>
<dbReference type="CTD" id="4783"/>
<dbReference type="eggNOG" id="KOG3119">
    <property type="taxonomic scope" value="Eukaryota"/>
</dbReference>
<dbReference type="GeneTree" id="ENSGT00940000160540"/>
<dbReference type="HOGENOM" id="CLU_052045_0_0_1"/>
<dbReference type="InParanoid" id="Q08D88"/>
<dbReference type="OrthoDB" id="6151507at2759"/>
<dbReference type="TreeFam" id="TF328374"/>
<dbReference type="Proteomes" id="UP000009136">
    <property type="component" value="Chromosome 8"/>
</dbReference>
<dbReference type="GO" id="GO:0005634">
    <property type="term" value="C:nucleus"/>
    <property type="evidence" value="ECO:0000318"/>
    <property type="project" value="GO_Central"/>
</dbReference>
<dbReference type="GO" id="GO:0090575">
    <property type="term" value="C:RNA polymerase II transcription regulator complex"/>
    <property type="evidence" value="ECO:0007669"/>
    <property type="project" value="Ensembl"/>
</dbReference>
<dbReference type="GO" id="GO:0001227">
    <property type="term" value="F:DNA-binding transcription repressor activity, RNA polymerase II-specific"/>
    <property type="evidence" value="ECO:0007669"/>
    <property type="project" value="Ensembl"/>
</dbReference>
<dbReference type="GO" id="GO:0042802">
    <property type="term" value="F:identical protein binding"/>
    <property type="evidence" value="ECO:0007669"/>
    <property type="project" value="Ensembl"/>
</dbReference>
<dbReference type="GO" id="GO:0000978">
    <property type="term" value="F:RNA polymerase II cis-regulatory region sequence-specific DNA binding"/>
    <property type="evidence" value="ECO:0007669"/>
    <property type="project" value="Ensembl"/>
</dbReference>
<dbReference type="GO" id="GO:0071353">
    <property type="term" value="P:cellular response to interleukin-4"/>
    <property type="evidence" value="ECO:0007669"/>
    <property type="project" value="Ensembl"/>
</dbReference>
<dbReference type="GO" id="GO:0007623">
    <property type="term" value="P:circadian rhythm"/>
    <property type="evidence" value="ECO:0000318"/>
    <property type="project" value="GO_Central"/>
</dbReference>
<dbReference type="GO" id="GO:0006955">
    <property type="term" value="P:immune response"/>
    <property type="evidence" value="ECO:0007669"/>
    <property type="project" value="InterPro"/>
</dbReference>
<dbReference type="GO" id="GO:0001779">
    <property type="term" value="P:natural killer cell differentiation"/>
    <property type="evidence" value="ECO:0000250"/>
    <property type="project" value="UniProtKB"/>
</dbReference>
<dbReference type="GO" id="GO:0045892">
    <property type="term" value="P:negative regulation of DNA-templated transcription"/>
    <property type="evidence" value="ECO:0000250"/>
    <property type="project" value="UniProtKB"/>
</dbReference>
<dbReference type="GO" id="GO:0045893">
    <property type="term" value="P:positive regulation of DNA-templated transcription"/>
    <property type="evidence" value="ECO:0000250"/>
    <property type="project" value="UniProtKB"/>
</dbReference>
<dbReference type="GO" id="GO:0010628">
    <property type="term" value="P:positive regulation of gene expression"/>
    <property type="evidence" value="ECO:0007669"/>
    <property type="project" value="Ensembl"/>
</dbReference>
<dbReference type="GO" id="GO:0006355">
    <property type="term" value="P:regulation of DNA-templated transcription"/>
    <property type="evidence" value="ECO:0000318"/>
    <property type="project" value="GO_Central"/>
</dbReference>
<dbReference type="GO" id="GO:0006366">
    <property type="term" value="P:transcription by RNA polymerase II"/>
    <property type="evidence" value="ECO:0007669"/>
    <property type="project" value="InterPro"/>
</dbReference>
<dbReference type="CDD" id="cd14694">
    <property type="entry name" value="bZIP_NFIL3"/>
    <property type="match status" value="1"/>
</dbReference>
<dbReference type="FunFam" id="1.20.5.170:FF:000025">
    <property type="entry name" value="nuclear factor interleukin-3-regulated protein-like"/>
    <property type="match status" value="1"/>
</dbReference>
<dbReference type="Gene3D" id="1.20.5.170">
    <property type="match status" value="1"/>
</dbReference>
<dbReference type="InterPro" id="IPR004827">
    <property type="entry name" value="bZIP"/>
</dbReference>
<dbReference type="InterPro" id="IPR046347">
    <property type="entry name" value="bZIP_sf"/>
</dbReference>
<dbReference type="InterPro" id="IPR047229">
    <property type="entry name" value="NFIL3-like"/>
</dbReference>
<dbReference type="InterPro" id="IPR047106">
    <property type="entry name" value="NFIL3-like_bZIP"/>
</dbReference>
<dbReference type="InterPro" id="IPR016743">
    <property type="entry name" value="NFIL3/E4BP4"/>
</dbReference>
<dbReference type="InterPro" id="IPR010533">
    <property type="entry name" value="Vert_IL3-reg_TF"/>
</dbReference>
<dbReference type="PANTHER" id="PTHR15284">
    <property type="entry name" value="NUCLEAR FACTOR INTERLEUKIN-3-REGULATED PROTEIN"/>
    <property type="match status" value="1"/>
</dbReference>
<dbReference type="PANTHER" id="PTHR15284:SF1">
    <property type="entry name" value="NUCLEAR FACTOR INTERLEUKIN-3-REGULATED PROTEIN"/>
    <property type="match status" value="1"/>
</dbReference>
<dbReference type="Pfam" id="PF07716">
    <property type="entry name" value="bZIP_2"/>
    <property type="match status" value="1"/>
</dbReference>
<dbReference type="Pfam" id="PF06529">
    <property type="entry name" value="Vert_IL3-reg_TF"/>
    <property type="match status" value="1"/>
</dbReference>
<dbReference type="PIRSF" id="PIRSF019029">
    <property type="entry name" value="bZIP_E4BP4"/>
    <property type="match status" value="1"/>
</dbReference>
<dbReference type="SMART" id="SM00338">
    <property type="entry name" value="BRLZ"/>
    <property type="match status" value="1"/>
</dbReference>
<dbReference type="SUPFAM" id="SSF57959">
    <property type="entry name" value="Leucine zipper domain"/>
    <property type="match status" value="1"/>
</dbReference>
<dbReference type="PROSITE" id="PS50217">
    <property type="entry name" value="BZIP"/>
    <property type="match status" value="1"/>
</dbReference>
<dbReference type="PROSITE" id="PS00036">
    <property type="entry name" value="BZIP_BASIC"/>
    <property type="match status" value="1"/>
</dbReference>
<proteinExistence type="evidence at transcript level"/>
<comment type="function">
    <text evidence="1 2">Acts as a transcriptional regulator that recognizes and binds to the sequence 5'-[GA]TTA[CT]GTAA[CT]-3', a sequence present in many cellular and viral promoters. Represses transcription from promoters with activating transcription factor (ATF) sites. Represses promoter activity in osteoblasts. Represses transcriptional activity of PER1. Represses transcriptional activity of PER2 via the B-site on the promoter. Activates transcription from the interleukin-3 promoter in T-cells. Competes for the same consensus-binding site with PAR DNA-binding factors (DBP, HLF and TEF). Component of the circadian clock that acts as a negative regulator for the circadian expression of PER2 oscillation in the cell-autonomous core clock. Protects pro-B cells from programmed cell death (By similarity). Represses the transcription of CYP2A5 (By similarity). Positively regulates the expression and activity of CES2 by antagonizing the repressive action of NR1D1 on CES2 (By similarity). Required for the development of natural killer cell precursors (By similarity).</text>
</comment>
<comment type="subunit">
    <text evidence="1 2">Homodimer (By similarity). Binds DNA as a dimer (By similarity). Interacts with CRY2, DR1 and PER2 (By similarity). Interacts with NR0B2 (By similarity). Interacts with MYSM1 (By similarity).</text>
</comment>
<comment type="subcellular location">
    <subcellularLocation>
        <location evidence="3">Nucleus</location>
    </subcellularLocation>
</comment>
<comment type="similarity">
    <text evidence="5">Belongs to the bZIP family. NFIL3 subfamily.</text>
</comment>